<reference key="1">
    <citation type="journal article" date="2001" name="Proc. Natl. Acad. Sci. U.S.A.">
        <title>Complete genomic sequence of Pasteurella multocida Pm70.</title>
        <authorList>
            <person name="May B.J."/>
            <person name="Zhang Q."/>
            <person name="Li L.L."/>
            <person name="Paustian M.L."/>
            <person name="Whittam T.S."/>
            <person name="Kapur V."/>
        </authorList>
    </citation>
    <scope>NUCLEOTIDE SEQUENCE [LARGE SCALE GENOMIC DNA]</scope>
    <source>
        <strain>Pm70</strain>
    </source>
</reference>
<feature type="chain" id="PRO_0000160063" description="Superoxide dismutase [Mn]">
    <location>
        <begin position="1"/>
        <end position="214"/>
    </location>
</feature>
<feature type="binding site" evidence="1">
    <location>
        <position position="27"/>
    </location>
    <ligand>
        <name>Mn(2+)</name>
        <dbReference type="ChEBI" id="CHEBI:29035"/>
    </ligand>
</feature>
<feature type="binding site" evidence="1">
    <location>
        <position position="82"/>
    </location>
    <ligand>
        <name>Mn(2+)</name>
        <dbReference type="ChEBI" id="CHEBI:29035"/>
    </ligand>
</feature>
<feature type="binding site" evidence="1">
    <location>
        <position position="169"/>
    </location>
    <ligand>
        <name>Mn(2+)</name>
        <dbReference type="ChEBI" id="CHEBI:29035"/>
    </ligand>
</feature>
<feature type="binding site" evidence="1">
    <location>
        <position position="173"/>
    </location>
    <ligand>
        <name>Mn(2+)</name>
        <dbReference type="ChEBI" id="CHEBI:29035"/>
    </ligand>
</feature>
<accession>Q9CPN6</accession>
<keyword id="KW-0464">Manganese</keyword>
<keyword id="KW-0479">Metal-binding</keyword>
<keyword id="KW-0560">Oxidoreductase</keyword>
<keyword id="KW-1185">Reference proteome</keyword>
<evidence type="ECO:0000250" key="1"/>
<evidence type="ECO:0000305" key="2"/>
<comment type="function">
    <text>Destroys superoxide anion radicals which are normally produced within the cells and which are toxic to biological systems.</text>
</comment>
<comment type="catalytic activity">
    <reaction>
        <text>2 superoxide + 2 H(+) = H2O2 + O2</text>
        <dbReference type="Rhea" id="RHEA:20696"/>
        <dbReference type="ChEBI" id="CHEBI:15378"/>
        <dbReference type="ChEBI" id="CHEBI:15379"/>
        <dbReference type="ChEBI" id="CHEBI:16240"/>
        <dbReference type="ChEBI" id="CHEBI:18421"/>
        <dbReference type="EC" id="1.15.1.1"/>
    </reaction>
</comment>
<comment type="cofactor">
    <cofactor evidence="1">
        <name>Mn(2+)</name>
        <dbReference type="ChEBI" id="CHEBI:29035"/>
    </cofactor>
    <text evidence="1">Binds 1 Mn(2+) ion per subunit.</text>
</comment>
<comment type="subunit">
    <text evidence="1">Homodimer.</text>
</comment>
<comment type="similarity">
    <text evidence="2">Belongs to the iron/manganese superoxide dismutase family.</text>
</comment>
<dbReference type="EC" id="1.15.1.1"/>
<dbReference type="EMBL" id="AE004439">
    <property type="protein sequence ID" value="AAK02085.1"/>
    <property type="molecule type" value="Genomic_DNA"/>
</dbReference>
<dbReference type="RefSeq" id="WP_005750998.1">
    <property type="nucleotide sequence ID" value="NC_002663.1"/>
</dbReference>
<dbReference type="SMR" id="Q9CPN6"/>
<dbReference type="STRING" id="272843.PM0001"/>
<dbReference type="EnsemblBacteria" id="AAK02085">
    <property type="protein sequence ID" value="AAK02085"/>
    <property type="gene ID" value="PM0001"/>
</dbReference>
<dbReference type="GeneID" id="77207341"/>
<dbReference type="KEGG" id="pmu:PM0001"/>
<dbReference type="HOGENOM" id="CLU_031625_0_1_6"/>
<dbReference type="OrthoDB" id="9803125at2"/>
<dbReference type="Proteomes" id="UP000000809">
    <property type="component" value="Chromosome"/>
</dbReference>
<dbReference type="GO" id="GO:0005737">
    <property type="term" value="C:cytoplasm"/>
    <property type="evidence" value="ECO:0007669"/>
    <property type="project" value="TreeGrafter"/>
</dbReference>
<dbReference type="GO" id="GO:0046872">
    <property type="term" value="F:metal ion binding"/>
    <property type="evidence" value="ECO:0007669"/>
    <property type="project" value="UniProtKB-KW"/>
</dbReference>
<dbReference type="GO" id="GO:0004784">
    <property type="term" value="F:superoxide dismutase activity"/>
    <property type="evidence" value="ECO:0007669"/>
    <property type="project" value="UniProtKB-EC"/>
</dbReference>
<dbReference type="FunFam" id="1.10.287.990:FF:000001">
    <property type="entry name" value="Superoxide dismutase"/>
    <property type="match status" value="1"/>
</dbReference>
<dbReference type="FunFam" id="3.55.40.20:FF:000001">
    <property type="entry name" value="Superoxide dismutase"/>
    <property type="match status" value="1"/>
</dbReference>
<dbReference type="Gene3D" id="1.10.287.990">
    <property type="entry name" value="Fe,Mn superoxide dismutase (SOD) domain"/>
    <property type="match status" value="1"/>
</dbReference>
<dbReference type="Gene3D" id="3.55.40.20">
    <property type="entry name" value="Iron/manganese superoxide dismutase, C-terminal domain"/>
    <property type="match status" value="1"/>
</dbReference>
<dbReference type="InterPro" id="IPR001189">
    <property type="entry name" value="Mn/Fe_SOD"/>
</dbReference>
<dbReference type="InterPro" id="IPR019833">
    <property type="entry name" value="Mn/Fe_SOD_BS"/>
</dbReference>
<dbReference type="InterPro" id="IPR019832">
    <property type="entry name" value="Mn/Fe_SOD_C"/>
</dbReference>
<dbReference type="InterPro" id="IPR019831">
    <property type="entry name" value="Mn/Fe_SOD_N"/>
</dbReference>
<dbReference type="InterPro" id="IPR036324">
    <property type="entry name" value="Mn/Fe_SOD_N_sf"/>
</dbReference>
<dbReference type="InterPro" id="IPR036314">
    <property type="entry name" value="SOD_C_sf"/>
</dbReference>
<dbReference type="NCBIfam" id="NF008177">
    <property type="entry name" value="PRK10925.1"/>
    <property type="match status" value="1"/>
</dbReference>
<dbReference type="PANTHER" id="PTHR43595">
    <property type="entry name" value="37S RIBOSOMAL PROTEIN S26, MITOCHONDRIAL"/>
    <property type="match status" value="1"/>
</dbReference>
<dbReference type="PANTHER" id="PTHR43595:SF2">
    <property type="entry name" value="SMALL RIBOSOMAL SUBUNIT PROTEIN MS42"/>
    <property type="match status" value="1"/>
</dbReference>
<dbReference type="Pfam" id="PF02777">
    <property type="entry name" value="Sod_Fe_C"/>
    <property type="match status" value="1"/>
</dbReference>
<dbReference type="Pfam" id="PF00081">
    <property type="entry name" value="Sod_Fe_N"/>
    <property type="match status" value="1"/>
</dbReference>
<dbReference type="PIRSF" id="PIRSF000349">
    <property type="entry name" value="SODismutase"/>
    <property type="match status" value="1"/>
</dbReference>
<dbReference type="PRINTS" id="PR01703">
    <property type="entry name" value="MNSODISMTASE"/>
</dbReference>
<dbReference type="SUPFAM" id="SSF54719">
    <property type="entry name" value="Fe,Mn superoxide dismutase (SOD), C-terminal domain"/>
    <property type="match status" value="1"/>
</dbReference>
<dbReference type="SUPFAM" id="SSF46609">
    <property type="entry name" value="Fe,Mn superoxide dismutase (SOD), N-terminal domain"/>
    <property type="match status" value="1"/>
</dbReference>
<dbReference type="PROSITE" id="PS00088">
    <property type="entry name" value="SOD_MN"/>
    <property type="match status" value="1"/>
</dbReference>
<organism>
    <name type="scientific">Pasteurella multocida (strain Pm70)</name>
    <dbReference type="NCBI Taxonomy" id="272843"/>
    <lineage>
        <taxon>Bacteria</taxon>
        <taxon>Pseudomonadati</taxon>
        <taxon>Pseudomonadota</taxon>
        <taxon>Gammaproteobacteria</taxon>
        <taxon>Pasteurellales</taxon>
        <taxon>Pasteurellaceae</taxon>
        <taxon>Pasteurella</taxon>
    </lineage>
</organism>
<protein>
    <recommendedName>
        <fullName>Superoxide dismutase [Mn]</fullName>
        <ecNumber>1.15.1.1</ecNumber>
    </recommendedName>
</protein>
<proteinExistence type="inferred from homology"/>
<name>SODM_PASMU</name>
<sequence>MAYTLPELGYAYDALEPHFDAMTMEIHHSKHHQAYVNNANAALENLPELAQGCPGQLLTKLAEVPADKLTAIRNNVGGHLNHSLFWKSLKKGTTLQGALKDAIVRDFGSVEAFQAEFEKAAATRFGSGWAWLVLQENGKLAVVSTANQDSPVMGKAIAGCEGYPLLGLDVWEHAYYLKFQNRRPDYIKEFWHVVNWDFVAERFEKKVEHCNCTK</sequence>
<gene>
    <name type="primary">sodA</name>
    <name type="ordered locus">PM0001</name>
</gene>